<accession>O93982</accession>
<accession>C5DVF1</accession>
<evidence type="ECO:0000250" key="1"/>
<evidence type="ECO:0000250" key="2">
    <source>
        <dbReference type="UniProtKB" id="P32485"/>
    </source>
</evidence>
<evidence type="ECO:0000250" key="3">
    <source>
        <dbReference type="UniProtKB" id="Q16539"/>
    </source>
</evidence>
<evidence type="ECO:0000250" key="4">
    <source>
        <dbReference type="UniProtKB" id="Q4WSF6"/>
    </source>
</evidence>
<evidence type="ECO:0000255" key="5">
    <source>
        <dbReference type="PROSITE-ProRule" id="PRU00159"/>
    </source>
</evidence>
<evidence type="ECO:0000255" key="6">
    <source>
        <dbReference type="PROSITE-ProRule" id="PRU10027"/>
    </source>
</evidence>
<evidence type="ECO:0000256" key="7">
    <source>
        <dbReference type="SAM" id="MobiDB-lite"/>
    </source>
</evidence>
<evidence type="ECO:0000305" key="8"/>
<protein>
    <recommendedName>
        <fullName>Mitogen-activated protein kinase HOG1</fullName>
        <shortName>MAP kinase HOG1</shortName>
        <ecNumber evidence="2">2.7.11.24</ecNumber>
    </recommendedName>
</protein>
<feature type="chain" id="PRO_0000186332" description="Mitogen-activated protein kinase HOG1">
    <location>
        <begin position="1"/>
        <end position="431"/>
    </location>
</feature>
<feature type="domain" description="Protein kinase" evidence="5">
    <location>
        <begin position="23"/>
        <end position="302"/>
    </location>
</feature>
<feature type="region of interest" description="Disordered" evidence="7">
    <location>
        <begin position="374"/>
        <end position="415"/>
    </location>
</feature>
<feature type="short sequence motif" description="TXY">
    <location>
        <begin position="174"/>
        <end position="176"/>
    </location>
</feature>
<feature type="compositionally biased region" description="Low complexity" evidence="7">
    <location>
        <begin position="374"/>
        <end position="406"/>
    </location>
</feature>
<feature type="active site" description="Proton acceptor" evidence="5 6">
    <location>
        <position position="144"/>
    </location>
</feature>
<feature type="binding site" evidence="5">
    <location>
        <begin position="29"/>
        <end position="37"/>
    </location>
    <ligand>
        <name>ATP</name>
        <dbReference type="ChEBI" id="CHEBI:30616"/>
    </ligand>
</feature>
<feature type="binding site" evidence="5">
    <location>
        <position position="52"/>
    </location>
    <ligand>
        <name>ATP</name>
        <dbReference type="ChEBI" id="CHEBI:30616"/>
    </ligand>
</feature>
<feature type="modified residue" description="Phosphothreonine" evidence="1">
    <location>
        <position position="174"/>
    </location>
</feature>
<feature type="modified residue" description="Phosphotyrosine" evidence="1">
    <location>
        <position position="176"/>
    </location>
</feature>
<feature type="sequence conflict" description="In Ref. 1; CAA10714." evidence="8" ref="1">
    <original>AAHAAA</original>
    <variation>P</variation>
    <location>
        <begin position="370"/>
        <end position="375"/>
    </location>
</feature>
<feature type="sequence conflict" description="In Ref. 1; CAA10714." evidence="8" ref="1">
    <original>HH</original>
    <variation>TN</variation>
    <location>
        <begin position="380"/>
        <end position="381"/>
    </location>
</feature>
<feature type="sequence conflict" description="In Ref. 1; CAA10714." evidence="8" ref="1">
    <original>Q</original>
    <variation>N</variation>
    <location>
        <position position="384"/>
    </location>
</feature>
<feature type="sequence conflict" description="In Ref. 1; CAA10714." evidence="8" ref="1">
    <location>
        <begin position="386"/>
        <end position="431"/>
    </location>
</feature>
<sequence>MATHEEFIRTQVFGTVFEITNRYTDLNPVGMGAFGLVCSATDTLAGQPVAIKKIMKPFSTAVLAKRTYRELKLLKHLRHENLICLQDIFLSPLEDIYFVTELQGTDLHRLLQTRPLEKQFVQYFLYQILRGLKYVHSAGVIHRDLKPSNILINENCDLKICDFGLARIQDPQMTGYVSTRYYRAPEIMLTWQKYDVEVDIWSAGCIFSEMIEGKPLFPGKDHVHQFSIITDLLGSPPRDVINTICSENTLKFVTSLPHRDPVPFQERFKTVEPDAVDLLERMLVFDPKKRITAADALVHPYLAPYHDPTDEPTAEAQFDWDFNDADLPVDTWRVMMYSEILDFHKIGGGDGQIDTNAAFDDQVAAATAAAAHAAAMAQHHHQTQQQSSGKHTNPTTSSSAATHNSNGPHSNHDAIANYGNQAVHYANEFQQ</sequence>
<comment type="function">
    <text evidence="4">Proline-directed serine/threonine-protein kinase involved in a signal transduction pathway that is activated by changes in the osmolarity of the extracellular environment. Controls osmotic regulation of transcription of target genes.</text>
</comment>
<comment type="catalytic activity">
    <reaction evidence="2">
        <text>L-seryl-[protein] + ATP = O-phospho-L-seryl-[protein] + ADP + H(+)</text>
        <dbReference type="Rhea" id="RHEA:17989"/>
        <dbReference type="Rhea" id="RHEA-COMP:9863"/>
        <dbReference type="Rhea" id="RHEA-COMP:11604"/>
        <dbReference type="ChEBI" id="CHEBI:15378"/>
        <dbReference type="ChEBI" id="CHEBI:29999"/>
        <dbReference type="ChEBI" id="CHEBI:30616"/>
        <dbReference type="ChEBI" id="CHEBI:83421"/>
        <dbReference type="ChEBI" id="CHEBI:456216"/>
        <dbReference type="EC" id="2.7.11.24"/>
    </reaction>
    <physiologicalReaction direction="left-to-right" evidence="2">
        <dbReference type="Rhea" id="RHEA:17990"/>
    </physiologicalReaction>
</comment>
<comment type="catalytic activity">
    <reaction evidence="2">
        <text>L-threonyl-[protein] + ATP = O-phospho-L-threonyl-[protein] + ADP + H(+)</text>
        <dbReference type="Rhea" id="RHEA:46608"/>
        <dbReference type="Rhea" id="RHEA-COMP:11060"/>
        <dbReference type="Rhea" id="RHEA-COMP:11605"/>
        <dbReference type="ChEBI" id="CHEBI:15378"/>
        <dbReference type="ChEBI" id="CHEBI:30013"/>
        <dbReference type="ChEBI" id="CHEBI:30616"/>
        <dbReference type="ChEBI" id="CHEBI:61977"/>
        <dbReference type="ChEBI" id="CHEBI:456216"/>
        <dbReference type="EC" id="2.7.11.24"/>
    </reaction>
    <physiologicalReaction direction="left-to-right" evidence="2">
        <dbReference type="Rhea" id="RHEA:46609"/>
    </physiologicalReaction>
</comment>
<comment type="cofactor">
    <cofactor evidence="3">
        <name>Mg(2+)</name>
        <dbReference type="ChEBI" id="CHEBI:18420"/>
    </cofactor>
</comment>
<comment type="activity regulation">
    <text evidence="1">Activated by tyrosine and threonine phosphorylation.</text>
</comment>
<comment type="subcellular location">
    <subcellularLocation>
        <location evidence="1">Cytoplasm</location>
    </subcellularLocation>
    <subcellularLocation>
        <location evidence="1">Nucleus</location>
    </subcellularLocation>
</comment>
<comment type="domain">
    <text>The TXY motif contains the threonine and tyrosine residues whose phosphorylation activates the MAP kinases.</text>
</comment>
<comment type="PTM">
    <text evidence="1">Dually phosphorylated on Thr-174 and Tyr-176, which activates the enzyme.</text>
</comment>
<comment type="similarity">
    <text evidence="5">Belongs to the protein kinase superfamily. Ser/Thr protein kinase family. MAP kinase subfamily. HOG1 sub-subfamily.</text>
</comment>
<proteinExistence type="inferred from homology"/>
<keyword id="KW-0010">Activator</keyword>
<keyword id="KW-0067">ATP-binding</keyword>
<keyword id="KW-0963">Cytoplasm</keyword>
<keyword id="KW-0418">Kinase</keyword>
<keyword id="KW-0547">Nucleotide-binding</keyword>
<keyword id="KW-0539">Nucleus</keyword>
<keyword id="KW-0597">Phosphoprotein</keyword>
<keyword id="KW-1185">Reference proteome</keyword>
<keyword id="KW-0723">Serine/threonine-protein kinase</keyword>
<keyword id="KW-0804">Transcription</keyword>
<keyword id="KW-0805">Transcription regulation</keyword>
<keyword id="KW-0808">Transferase</keyword>
<gene>
    <name type="primary">HOG1</name>
    <name type="ordered locus">ZYRO0D06182g</name>
</gene>
<name>HOG1_ZYGRC</name>
<dbReference type="EC" id="2.7.11.24" evidence="2"/>
<dbReference type="EMBL" id="AJ132606">
    <property type="protein sequence ID" value="CAA10714.1"/>
    <property type="molecule type" value="Genomic_DNA"/>
</dbReference>
<dbReference type="EMBL" id="CU928176">
    <property type="protein sequence ID" value="CAR27770.1"/>
    <property type="molecule type" value="Genomic_DNA"/>
</dbReference>
<dbReference type="RefSeq" id="XP_002496703.1">
    <property type="nucleotide sequence ID" value="XM_002496658.1"/>
</dbReference>
<dbReference type="SMR" id="O93982"/>
<dbReference type="FunCoup" id="O93982">
    <property type="interactions" value="780"/>
</dbReference>
<dbReference type="STRING" id="559307.O93982"/>
<dbReference type="GeneID" id="8203956"/>
<dbReference type="KEGG" id="zro:ZYRO0D06182g"/>
<dbReference type="HOGENOM" id="CLU_000288_181_1_1"/>
<dbReference type="InParanoid" id="O93982"/>
<dbReference type="Proteomes" id="UP000008536">
    <property type="component" value="Chromosome D"/>
</dbReference>
<dbReference type="GO" id="GO:0005737">
    <property type="term" value="C:cytoplasm"/>
    <property type="evidence" value="ECO:0007669"/>
    <property type="project" value="UniProtKB-SubCell"/>
</dbReference>
<dbReference type="GO" id="GO:0005634">
    <property type="term" value="C:nucleus"/>
    <property type="evidence" value="ECO:0007669"/>
    <property type="project" value="UniProtKB-SubCell"/>
</dbReference>
<dbReference type="GO" id="GO:0005524">
    <property type="term" value="F:ATP binding"/>
    <property type="evidence" value="ECO:0007669"/>
    <property type="project" value="UniProtKB-KW"/>
</dbReference>
<dbReference type="GO" id="GO:0004707">
    <property type="term" value="F:MAP kinase activity"/>
    <property type="evidence" value="ECO:0007669"/>
    <property type="project" value="UniProtKB-EC"/>
</dbReference>
<dbReference type="GO" id="GO:0106310">
    <property type="term" value="F:protein serine kinase activity"/>
    <property type="evidence" value="ECO:0007669"/>
    <property type="project" value="RHEA"/>
</dbReference>
<dbReference type="GO" id="GO:0051403">
    <property type="term" value="P:stress-activated MAPK cascade"/>
    <property type="evidence" value="ECO:0007669"/>
    <property type="project" value="InterPro"/>
</dbReference>
<dbReference type="CDD" id="cd07856">
    <property type="entry name" value="STKc_Sty1_Hog1"/>
    <property type="match status" value="1"/>
</dbReference>
<dbReference type="FunFam" id="1.10.510.10:FF:000049">
    <property type="entry name" value="Mitogen-activated protein kinase"/>
    <property type="match status" value="1"/>
</dbReference>
<dbReference type="FunFam" id="3.30.200.20:FF:000050">
    <property type="entry name" value="Mitogen-activated protein kinase"/>
    <property type="match status" value="1"/>
</dbReference>
<dbReference type="Gene3D" id="3.30.200.20">
    <property type="entry name" value="Phosphorylase Kinase, domain 1"/>
    <property type="match status" value="1"/>
</dbReference>
<dbReference type="Gene3D" id="1.10.510.10">
    <property type="entry name" value="Transferase(Phosphotransferase) domain 1"/>
    <property type="match status" value="1"/>
</dbReference>
<dbReference type="InterPro" id="IPR011009">
    <property type="entry name" value="Kinase-like_dom_sf"/>
</dbReference>
<dbReference type="InterPro" id="IPR050117">
    <property type="entry name" value="MAP_kinase"/>
</dbReference>
<dbReference type="InterPro" id="IPR003527">
    <property type="entry name" value="MAP_kinase_CS"/>
</dbReference>
<dbReference type="InterPro" id="IPR008352">
    <property type="entry name" value="MAPK_p38-like"/>
</dbReference>
<dbReference type="InterPro" id="IPR038783">
    <property type="entry name" value="MAPK_Sty1/Hog1"/>
</dbReference>
<dbReference type="InterPro" id="IPR000719">
    <property type="entry name" value="Prot_kinase_dom"/>
</dbReference>
<dbReference type="InterPro" id="IPR017441">
    <property type="entry name" value="Protein_kinase_ATP_BS"/>
</dbReference>
<dbReference type="InterPro" id="IPR008271">
    <property type="entry name" value="Ser/Thr_kinase_AS"/>
</dbReference>
<dbReference type="PANTHER" id="PTHR24055">
    <property type="entry name" value="MITOGEN-ACTIVATED PROTEIN KINASE"/>
    <property type="match status" value="1"/>
</dbReference>
<dbReference type="Pfam" id="PF00069">
    <property type="entry name" value="Pkinase"/>
    <property type="match status" value="1"/>
</dbReference>
<dbReference type="PRINTS" id="PR01773">
    <property type="entry name" value="P38MAPKINASE"/>
</dbReference>
<dbReference type="SMART" id="SM00220">
    <property type="entry name" value="S_TKc"/>
    <property type="match status" value="1"/>
</dbReference>
<dbReference type="SUPFAM" id="SSF56112">
    <property type="entry name" value="Protein kinase-like (PK-like)"/>
    <property type="match status" value="1"/>
</dbReference>
<dbReference type="PROSITE" id="PS01351">
    <property type="entry name" value="MAPK"/>
    <property type="match status" value="1"/>
</dbReference>
<dbReference type="PROSITE" id="PS00107">
    <property type="entry name" value="PROTEIN_KINASE_ATP"/>
    <property type="match status" value="1"/>
</dbReference>
<dbReference type="PROSITE" id="PS50011">
    <property type="entry name" value="PROTEIN_KINASE_DOM"/>
    <property type="match status" value="1"/>
</dbReference>
<dbReference type="PROSITE" id="PS00108">
    <property type="entry name" value="PROTEIN_KINASE_ST"/>
    <property type="match status" value="1"/>
</dbReference>
<reference key="1">
    <citation type="journal article" date="2001" name="J. Biotechnol.">
        <title>The Zygosaccharomyces rouxii strain CBS732 contains only one copy of the HOG1 and the SOD2 genes.</title>
        <authorList>
            <person name="Kinclova O."/>
            <person name="Potier S."/>
            <person name="Sychrova H."/>
        </authorList>
    </citation>
    <scope>NUCLEOTIDE SEQUENCE [GENOMIC DNA]</scope>
</reference>
<reference key="2">
    <citation type="journal article" date="2009" name="Genome Res.">
        <title>Comparative genomics of protoploid Saccharomycetaceae.</title>
        <authorList>
            <consortium name="The Genolevures Consortium"/>
            <person name="Souciet J.-L."/>
            <person name="Dujon B."/>
            <person name="Gaillardin C."/>
            <person name="Johnston M."/>
            <person name="Baret P.V."/>
            <person name="Cliften P."/>
            <person name="Sherman D.J."/>
            <person name="Weissenbach J."/>
            <person name="Westhof E."/>
            <person name="Wincker P."/>
            <person name="Jubin C."/>
            <person name="Poulain J."/>
            <person name="Barbe V."/>
            <person name="Segurens B."/>
            <person name="Artiguenave F."/>
            <person name="Anthouard V."/>
            <person name="Vacherie B."/>
            <person name="Val M.-E."/>
            <person name="Fulton R.S."/>
            <person name="Minx P."/>
            <person name="Wilson R."/>
            <person name="Durrens P."/>
            <person name="Jean G."/>
            <person name="Marck C."/>
            <person name="Martin T."/>
            <person name="Nikolski M."/>
            <person name="Rolland T."/>
            <person name="Seret M.-L."/>
            <person name="Casaregola S."/>
            <person name="Despons L."/>
            <person name="Fairhead C."/>
            <person name="Fischer G."/>
            <person name="Lafontaine I."/>
            <person name="Leh V."/>
            <person name="Lemaire M."/>
            <person name="de Montigny J."/>
            <person name="Neuveglise C."/>
            <person name="Thierry A."/>
            <person name="Blanc-Lenfle I."/>
            <person name="Bleykasten C."/>
            <person name="Diffels J."/>
            <person name="Fritsch E."/>
            <person name="Frangeul L."/>
            <person name="Goeffon A."/>
            <person name="Jauniaux N."/>
            <person name="Kachouri-Lafond R."/>
            <person name="Payen C."/>
            <person name="Potier S."/>
            <person name="Pribylova L."/>
            <person name="Ozanne C."/>
            <person name="Richard G.-F."/>
            <person name="Sacerdot C."/>
            <person name="Straub M.-L."/>
            <person name="Talla E."/>
        </authorList>
    </citation>
    <scope>NUCLEOTIDE SEQUENCE [LARGE SCALE GENOMIC DNA]</scope>
    <source>
        <strain>ATCC 2623 / CBS 732 / BCRC 21506 / NBRC 1130 / NCYC 568 / NRRL Y-229</strain>
    </source>
</reference>
<organism>
    <name type="scientific">Zygosaccharomyces rouxii (strain ATCC 2623 / CBS 732 / NBRC 1130 / NCYC 568 / NRRL Y-229)</name>
    <dbReference type="NCBI Taxonomy" id="559307"/>
    <lineage>
        <taxon>Eukaryota</taxon>
        <taxon>Fungi</taxon>
        <taxon>Dikarya</taxon>
        <taxon>Ascomycota</taxon>
        <taxon>Saccharomycotina</taxon>
        <taxon>Saccharomycetes</taxon>
        <taxon>Saccharomycetales</taxon>
        <taxon>Saccharomycetaceae</taxon>
        <taxon>Zygosaccharomyces</taxon>
    </lineage>
</organism>